<protein>
    <recommendedName>
        <fullName evidence="1">GMP reductase</fullName>
        <ecNumber evidence="1">1.7.1.7</ecNumber>
    </recommendedName>
    <alternativeName>
        <fullName evidence="1">Guanosine 5'-monophosphate oxidoreductase</fullName>
        <shortName evidence="1">Guanosine monophosphate reductase</shortName>
    </alternativeName>
</protein>
<proteinExistence type="inferred from homology"/>
<name>GUAC_HELPY</name>
<gene>
    <name evidence="1" type="primary">guaC</name>
    <name type="ordered locus">HP_0854</name>
</gene>
<organism>
    <name type="scientific">Helicobacter pylori (strain ATCC 700392 / 26695)</name>
    <name type="common">Campylobacter pylori</name>
    <dbReference type="NCBI Taxonomy" id="85962"/>
    <lineage>
        <taxon>Bacteria</taxon>
        <taxon>Pseudomonadati</taxon>
        <taxon>Campylobacterota</taxon>
        <taxon>Epsilonproteobacteria</taxon>
        <taxon>Campylobacterales</taxon>
        <taxon>Helicobacteraceae</taxon>
        <taxon>Helicobacter</taxon>
    </lineage>
</organism>
<dbReference type="EC" id="1.7.1.7" evidence="1"/>
<dbReference type="EMBL" id="AE000511">
    <property type="protein sequence ID" value="AAD07901.1"/>
    <property type="molecule type" value="Genomic_DNA"/>
</dbReference>
<dbReference type="PIR" id="F64626">
    <property type="entry name" value="F64626"/>
</dbReference>
<dbReference type="RefSeq" id="NP_207648.1">
    <property type="nucleotide sequence ID" value="NC_000915.1"/>
</dbReference>
<dbReference type="SMR" id="O25525"/>
<dbReference type="DIP" id="DIP-3407N"/>
<dbReference type="FunCoup" id="O25525">
    <property type="interactions" value="133"/>
</dbReference>
<dbReference type="IntAct" id="O25525">
    <property type="interactions" value="1"/>
</dbReference>
<dbReference type="MINT" id="O25525"/>
<dbReference type="STRING" id="85962.HP_0854"/>
<dbReference type="PaxDb" id="85962-C694_04375"/>
<dbReference type="EnsemblBacteria" id="AAD07901">
    <property type="protein sequence ID" value="AAD07901"/>
    <property type="gene ID" value="HP_0854"/>
</dbReference>
<dbReference type="KEGG" id="hpy:HP_0854"/>
<dbReference type="PATRIC" id="fig|85962.8.peg.886"/>
<dbReference type="eggNOG" id="COG0516">
    <property type="taxonomic scope" value="Bacteria"/>
</dbReference>
<dbReference type="InParanoid" id="O25525"/>
<dbReference type="OrthoDB" id="9805398at2"/>
<dbReference type="PhylomeDB" id="O25525"/>
<dbReference type="Proteomes" id="UP000000429">
    <property type="component" value="Chromosome"/>
</dbReference>
<dbReference type="GO" id="GO:1902560">
    <property type="term" value="C:GMP reductase complex"/>
    <property type="evidence" value="ECO:0007669"/>
    <property type="project" value="InterPro"/>
</dbReference>
<dbReference type="GO" id="GO:0003920">
    <property type="term" value="F:GMP reductase activity"/>
    <property type="evidence" value="ECO:0007669"/>
    <property type="project" value="UniProtKB-UniRule"/>
</dbReference>
<dbReference type="GO" id="GO:0006163">
    <property type="term" value="P:purine nucleotide metabolic process"/>
    <property type="evidence" value="ECO:0007669"/>
    <property type="project" value="UniProtKB-UniRule"/>
</dbReference>
<dbReference type="CDD" id="cd00381">
    <property type="entry name" value="IMPDH"/>
    <property type="match status" value="1"/>
</dbReference>
<dbReference type="FunFam" id="3.20.20.70:FF:000079">
    <property type="entry name" value="GMP reductase"/>
    <property type="match status" value="1"/>
</dbReference>
<dbReference type="Gene3D" id="3.20.20.70">
    <property type="entry name" value="Aldolase class I"/>
    <property type="match status" value="1"/>
</dbReference>
<dbReference type="HAMAP" id="MF_01511">
    <property type="entry name" value="GMP_reduct_type2"/>
    <property type="match status" value="1"/>
</dbReference>
<dbReference type="InterPro" id="IPR013785">
    <property type="entry name" value="Aldolase_TIM"/>
</dbReference>
<dbReference type="InterPro" id="IPR050139">
    <property type="entry name" value="GMP_reductase"/>
</dbReference>
<dbReference type="InterPro" id="IPR005994">
    <property type="entry name" value="GuaC_type_2"/>
</dbReference>
<dbReference type="InterPro" id="IPR015875">
    <property type="entry name" value="IMP_DH/GMP_Rdtase_CS"/>
</dbReference>
<dbReference type="InterPro" id="IPR001093">
    <property type="entry name" value="IMP_DH_GMPRt"/>
</dbReference>
<dbReference type="NCBIfam" id="TIGR01306">
    <property type="entry name" value="GMP_reduct_2"/>
    <property type="match status" value="1"/>
</dbReference>
<dbReference type="NCBIfam" id="NF003966">
    <property type="entry name" value="PRK05458.1"/>
    <property type="match status" value="1"/>
</dbReference>
<dbReference type="PANTHER" id="PTHR43170">
    <property type="entry name" value="GMP REDUCTASE"/>
    <property type="match status" value="1"/>
</dbReference>
<dbReference type="PANTHER" id="PTHR43170:SF5">
    <property type="entry name" value="GMP REDUCTASE"/>
    <property type="match status" value="1"/>
</dbReference>
<dbReference type="Pfam" id="PF00478">
    <property type="entry name" value="IMPDH"/>
    <property type="match status" value="1"/>
</dbReference>
<dbReference type="PIRSF" id="PIRSF036500">
    <property type="entry name" value="GMP_red_Firmic"/>
    <property type="match status" value="1"/>
</dbReference>
<dbReference type="SMART" id="SM01240">
    <property type="entry name" value="IMPDH"/>
    <property type="match status" value="1"/>
</dbReference>
<dbReference type="SUPFAM" id="SSF51412">
    <property type="entry name" value="Inosine monophosphate dehydrogenase (IMPDH)"/>
    <property type="match status" value="1"/>
</dbReference>
<dbReference type="PROSITE" id="PS00487">
    <property type="entry name" value="IMP_DH_GMP_RED"/>
    <property type="match status" value="1"/>
</dbReference>
<evidence type="ECO:0000255" key="1">
    <source>
        <dbReference type="HAMAP-Rule" id="MF_01511"/>
    </source>
</evidence>
<accession>O25525</accession>
<comment type="function">
    <text evidence="1">Catalyzes the irreversible NADPH-dependent deamination of GMP to IMP. It functions in the conversion of nucleobase, nucleoside and nucleotide derivatives of G to A nucleotides, and in maintaining the intracellular balance of A and G nucleotides.</text>
</comment>
<comment type="catalytic activity">
    <reaction evidence="1">
        <text>IMP + NH4(+) + NADP(+) = GMP + NADPH + 2 H(+)</text>
        <dbReference type="Rhea" id="RHEA:17185"/>
        <dbReference type="ChEBI" id="CHEBI:15378"/>
        <dbReference type="ChEBI" id="CHEBI:28938"/>
        <dbReference type="ChEBI" id="CHEBI:57783"/>
        <dbReference type="ChEBI" id="CHEBI:58053"/>
        <dbReference type="ChEBI" id="CHEBI:58115"/>
        <dbReference type="ChEBI" id="CHEBI:58349"/>
        <dbReference type="EC" id="1.7.1.7"/>
    </reaction>
</comment>
<comment type="similarity">
    <text evidence="1">Belongs to the IMPDH/GMPR family. GuaC type 2 subfamily.</text>
</comment>
<keyword id="KW-0521">NADP</keyword>
<keyword id="KW-0560">Oxidoreductase</keyword>
<keyword id="KW-1185">Reference proteome</keyword>
<feature type="chain" id="PRO_0000093756" description="GMP reductase">
    <location>
        <begin position="1"/>
        <end position="327"/>
    </location>
</feature>
<feature type="active site" description="Thioimidate intermediate" evidence="1">
    <location>
        <position position="176"/>
    </location>
</feature>
<feature type="binding site" evidence="1">
    <location>
        <begin position="205"/>
        <end position="228"/>
    </location>
    <ligand>
        <name>NADP(+)</name>
        <dbReference type="ChEBI" id="CHEBI:58349"/>
    </ligand>
</feature>
<sequence length="327" mass="36039">MSLKVFDYEDVQLIPNKCIVNSRSECDTTVILGKHAFKMPIVPANMQTIINESIAEFLAENGYFYIMHRFDGAARIPFVKKMKKRQWISSISVGVKKEECLFVEELAKQGLAPDYITIDIAHGHSNSVIEMIQRIKTHLPETFVIAGNVGTPEAVRELENAGADATKVGIGPGKVCITKIKTGFGTGGWQLAALRWCAKAARKPIIADGGIRTHGDIVKSIRFGATMVMIGSLFAGHEESSGETKIENGIAYKEYFGSASEFQKGEKKNIEGKKIWIQHKGSLKDTLVEMHQDLQSSISYAGGRDLEAIRKVDYVIVKNSIFNGDAI</sequence>
<reference key="1">
    <citation type="journal article" date="1997" name="Nature">
        <title>The complete genome sequence of the gastric pathogen Helicobacter pylori.</title>
        <authorList>
            <person name="Tomb J.-F."/>
            <person name="White O."/>
            <person name="Kerlavage A.R."/>
            <person name="Clayton R.A."/>
            <person name="Sutton G.G."/>
            <person name="Fleischmann R.D."/>
            <person name="Ketchum K.A."/>
            <person name="Klenk H.-P."/>
            <person name="Gill S.R."/>
            <person name="Dougherty B.A."/>
            <person name="Nelson K.E."/>
            <person name="Quackenbush J."/>
            <person name="Zhou L."/>
            <person name="Kirkness E.F."/>
            <person name="Peterson S.N."/>
            <person name="Loftus B.J."/>
            <person name="Richardson D.L."/>
            <person name="Dodson R.J."/>
            <person name="Khalak H.G."/>
            <person name="Glodek A."/>
            <person name="McKenney K."/>
            <person name="FitzGerald L.M."/>
            <person name="Lee N."/>
            <person name="Adams M.D."/>
            <person name="Hickey E.K."/>
            <person name="Berg D.E."/>
            <person name="Gocayne J.D."/>
            <person name="Utterback T.R."/>
            <person name="Peterson J.D."/>
            <person name="Kelley J.M."/>
            <person name="Cotton M.D."/>
            <person name="Weidman J.F."/>
            <person name="Fujii C."/>
            <person name="Bowman C."/>
            <person name="Watthey L."/>
            <person name="Wallin E."/>
            <person name="Hayes W.S."/>
            <person name="Borodovsky M."/>
            <person name="Karp P.D."/>
            <person name="Smith H.O."/>
            <person name="Fraser C.M."/>
            <person name="Venter J.C."/>
        </authorList>
    </citation>
    <scope>NUCLEOTIDE SEQUENCE [LARGE SCALE GENOMIC DNA]</scope>
    <source>
        <strain>ATCC 700392 / 26695</strain>
    </source>
</reference>